<gene>
    <name evidence="1" type="primary">rpmA</name>
    <name type="ordered locus">aq_1773.1</name>
    <name type="ORF">aq_1773A</name>
</gene>
<comment type="similarity">
    <text evidence="1">Belongs to the bacterial ribosomal protein bL27 family.</text>
</comment>
<name>RL27_AQUAE</name>
<reference key="1">
    <citation type="journal article" date="1998" name="Nature">
        <title>The complete genome of the hyperthermophilic bacterium Aquifex aeolicus.</title>
        <authorList>
            <person name="Deckert G."/>
            <person name="Warren P.V."/>
            <person name="Gaasterland T."/>
            <person name="Young W.G."/>
            <person name="Lenox A.L."/>
            <person name="Graham D.E."/>
            <person name="Overbeek R."/>
            <person name="Snead M.A."/>
            <person name="Keller M."/>
            <person name="Aujay M."/>
            <person name="Huber R."/>
            <person name="Feldman R.A."/>
            <person name="Short J.M."/>
            <person name="Olsen G.J."/>
            <person name="Swanson R.V."/>
        </authorList>
    </citation>
    <scope>NUCLEOTIDE SEQUENCE [LARGE SCALE GENOMIC DNA]</scope>
    <source>
        <strain>VF5</strain>
    </source>
</reference>
<accession>O67650</accession>
<dbReference type="EMBL" id="AE000657">
    <property type="protein sequence ID" value="AAC07615.1"/>
    <property type="molecule type" value="Genomic_DNA"/>
</dbReference>
<dbReference type="PIR" id="H70452">
    <property type="entry name" value="H70452"/>
</dbReference>
<dbReference type="RefSeq" id="NP_214216.1">
    <property type="nucleotide sequence ID" value="NC_000918.1"/>
</dbReference>
<dbReference type="RefSeq" id="WP_010881153.1">
    <property type="nucleotide sequence ID" value="NC_000918.1"/>
</dbReference>
<dbReference type="SMR" id="O67650"/>
<dbReference type="FunCoup" id="O67650">
    <property type="interactions" value="497"/>
</dbReference>
<dbReference type="STRING" id="224324.aq_1773a"/>
<dbReference type="EnsemblBacteria" id="AAC07615">
    <property type="protein sequence ID" value="AAC07615"/>
    <property type="gene ID" value="aq_1773a"/>
</dbReference>
<dbReference type="KEGG" id="aae:aq_1773a"/>
<dbReference type="PATRIC" id="fig|224324.8.peg.1370"/>
<dbReference type="eggNOG" id="COG0211">
    <property type="taxonomic scope" value="Bacteria"/>
</dbReference>
<dbReference type="HOGENOM" id="CLU_095424_4_1_0"/>
<dbReference type="InParanoid" id="O67650"/>
<dbReference type="OrthoDB" id="9803474at2"/>
<dbReference type="Proteomes" id="UP000000798">
    <property type="component" value="Chromosome"/>
</dbReference>
<dbReference type="GO" id="GO:0022625">
    <property type="term" value="C:cytosolic large ribosomal subunit"/>
    <property type="evidence" value="ECO:0000314"/>
    <property type="project" value="CAFA"/>
</dbReference>
<dbReference type="GO" id="GO:0043022">
    <property type="term" value="F:ribosome binding"/>
    <property type="evidence" value="ECO:0000314"/>
    <property type="project" value="CAFA"/>
</dbReference>
<dbReference type="GO" id="GO:0003735">
    <property type="term" value="F:structural constituent of ribosome"/>
    <property type="evidence" value="ECO:0000318"/>
    <property type="project" value="GO_Central"/>
</dbReference>
<dbReference type="GO" id="GO:1902626">
    <property type="term" value="P:assembly of large subunit precursor of preribosome"/>
    <property type="evidence" value="ECO:0000314"/>
    <property type="project" value="CAFA"/>
</dbReference>
<dbReference type="GO" id="GO:0000027">
    <property type="term" value="P:ribosomal large subunit assembly"/>
    <property type="evidence" value="ECO:0000314"/>
    <property type="project" value="CAFA"/>
</dbReference>
<dbReference type="GO" id="GO:0006412">
    <property type="term" value="P:translation"/>
    <property type="evidence" value="ECO:0007669"/>
    <property type="project" value="UniProtKB-UniRule"/>
</dbReference>
<dbReference type="FunFam" id="2.40.50.100:FF:000001">
    <property type="entry name" value="50S ribosomal protein L27"/>
    <property type="match status" value="1"/>
</dbReference>
<dbReference type="Gene3D" id="2.40.50.100">
    <property type="match status" value="1"/>
</dbReference>
<dbReference type="HAMAP" id="MF_00539">
    <property type="entry name" value="Ribosomal_bL27"/>
    <property type="match status" value="1"/>
</dbReference>
<dbReference type="InterPro" id="IPR001684">
    <property type="entry name" value="Ribosomal_bL27"/>
</dbReference>
<dbReference type="InterPro" id="IPR018261">
    <property type="entry name" value="Ribosomal_bL27_CS"/>
</dbReference>
<dbReference type="NCBIfam" id="TIGR00062">
    <property type="entry name" value="L27"/>
    <property type="match status" value="1"/>
</dbReference>
<dbReference type="PANTHER" id="PTHR15893:SF0">
    <property type="entry name" value="LARGE RIBOSOMAL SUBUNIT PROTEIN BL27M"/>
    <property type="match status" value="1"/>
</dbReference>
<dbReference type="PANTHER" id="PTHR15893">
    <property type="entry name" value="RIBOSOMAL PROTEIN L27"/>
    <property type="match status" value="1"/>
</dbReference>
<dbReference type="Pfam" id="PF01016">
    <property type="entry name" value="Ribosomal_L27"/>
    <property type="match status" value="1"/>
</dbReference>
<dbReference type="PRINTS" id="PR00063">
    <property type="entry name" value="RIBOSOMALL27"/>
</dbReference>
<dbReference type="SUPFAM" id="SSF110324">
    <property type="entry name" value="Ribosomal L27 protein-like"/>
    <property type="match status" value="1"/>
</dbReference>
<dbReference type="PROSITE" id="PS00831">
    <property type="entry name" value="RIBOSOMAL_L27"/>
    <property type="match status" value="1"/>
</dbReference>
<keyword id="KW-1185">Reference proteome</keyword>
<keyword id="KW-0687">Ribonucleoprotein</keyword>
<keyword id="KW-0689">Ribosomal protein</keyword>
<sequence>MASKASGGSTRNGRDSISKRLGVKRYDGQFVKAGNIIVRQRGTRIYPGKNVGMGSDYTLFALKDGYVYFETRRKKKFVSVLSPEEWEKVMAQKNGKVH</sequence>
<organism>
    <name type="scientific">Aquifex aeolicus (strain VF5)</name>
    <dbReference type="NCBI Taxonomy" id="224324"/>
    <lineage>
        <taxon>Bacteria</taxon>
        <taxon>Pseudomonadati</taxon>
        <taxon>Aquificota</taxon>
        <taxon>Aquificia</taxon>
        <taxon>Aquificales</taxon>
        <taxon>Aquificaceae</taxon>
        <taxon>Aquifex</taxon>
    </lineage>
</organism>
<feature type="chain" id="PRO_0000181032" description="Large ribosomal subunit protein bL27">
    <location>
        <begin position="1"/>
        <end position="98"/>
    </location>
</feature>
<feature type="region of interest" description="Disordered" evidence="2">
    <location>
        <begin position="1"/>
        <end position="20"/>
    </location>
</feature>
<feature type="compositionally biased region" description="Polar residues" evidence="2">
    <location>
        <begin position="1"/>
        <end position="11"/>
    </location>
</feature>
<proteinExistence type="inferred from homology"/>
<protein>
    <recommendedName>
        <fullName evidence="1">Large ribosomal subunit protein bL27</fullName>
    </recommendedName>
    <alternativeName>
        <fullName evidence="3">50S ribosomal protein L27</fullName>
    </alternativeName>
</protein>
<evidence type="ECO:0000255" key="1">
    <source>
        <dbReference type="HAMAP-Rule" id="MF_00539"/>
    </source>
</evidence>
<evidence type="ECO:0000256" key="2">
    <source>
        <dbReference type="SAM" id="MobiDB-lite"/>
    </source>
</evidence>
<evidence type="ECO:0000305" key="3"/>